<comment type="function">
    <text evidence="1">Required for the first step of histidine biosynthesis. May allow the feedback regulation of ATP phosphoribosyltransferase activity by histidine (By similarity).</text>
</comment>
<comment type="pathway">
    <text>Amino-acid biosynthesis; L-histidine biosynthesis; L-histidine from 5-phospho-alpha-D-ribose 1-diphosphate: step 1/9.</text>
</comment>
<comment type="subunit">
    <text evidence="1">Heteromultimer composed of HisG and HisZ subunits.</text>
</comment>
<comment type="subcellular location">
    <subcellularLocation>
        <location evidence="1">Cytoplasm</location>
    </subcellularLocation>
</comment>
<comment type="miscellaneous">
    <text>This function is generally fulfilled by the C-terminal part of HisG, which is missing in some bacteria such as this one.</text>
</comment>
<comment type="similarity">
    <text evidence="2">Belongs to the class-II aminoacyl-tRNA synthetase family. HisZ subfamily.</text>
</comment>
<name>HISZ_LISMO</name>
<reference key="1">
    <citation type="journal article" date="2001" name="Science">
        <title>Comparative genomics of Listeria species.</title>
        <authorList>
            <person name="Glaser P."/>
            <person name="Frangeul L."/>
            <person name="Buchrieser C."/>
            <person name="Rusniok C."/>
            <person name="Amend A."/>
            <person name="Baquero F."/>
            <person name="Berche P."/>
            <person name="Bloecker H."/>
            <person name="Brandt P."/>
            <person name="Chakraborty T."/>
            <person name="Charbit A."/>
            <person name="Chetouani F."/>
            <person name="Couve E."/>
            <person name="de Daruvar A."/>
            <person name="Dehoux P."/>
            <person name="Domann E."/>
            <person name="Dominguez-Bernal G."/>
            <person name="Duchaud E."/>
            <person name="Durant L."/>
            <person name="Dussurget O."/>
            <person name="Entian K.-D."/>
            <person name="Fsihi H."/>
            <person name="Garcia-del Portillo F."/>
            <person name="Garrido P."/>
            <person name="Gautier L."/>
            <person name="Goebel W."/>
            <person name="Gomez-Lopez N."/>
            <person name="Hain T."/>
            <person name="Hauf J."/>
            <person name="Jackson D."/>
            <person name="Jones L.-M."/>
            <person name="Kaerst U."/>
            <person name="Kreft J."/>
            <person name="Kuhn M."/>
            <person name="Kunst F."/>
            <person name="Kurapkat G."/>
            <person name="Madueno E."/>
            <person name="Maitournam A."/>
            <person name="Mata Vicente J."/>
            <person name="Ng E."/>
            <person name="Nedjari H."/>
            <person name="Nordsiek G."/>
            <person name="Novella S."/>
            <person name="de Pablos B."/>
            <person name="Perez-Diaz J.-C."/>
            <person name="Purcell R."/>
            <person name="Remmel B."/>
            <person name="Rose M."/>
            <person name="Schlueter T."/>
            <person name="Simoes N."/>
            <person name="Tierrez A."/>
            <person name="Vazquez-Boland J.-A."/>
            <person name="Voss H."/>
            <person name="Wehland J."/>
            <person name="Cossart P."/>
        </authorList>
    </citation>
    <scope>NUCLEOTIDE SEQUENCE [LARGE SCALE GENOMIC DNA]</scope>
    <source>
        <strain>ATCC BAA-679 / EGD-e</strain>
    </source>
</reference>
<sequence>MNLNKNLPTGTRDKLFREARAAYKIEQQVNHYFEKRGFKRIETPVIEFEDVFSSEHQADAKLYRFFDEKGRLTVLRPDMTLPIGRVVSTTGVMLPLKLSYSGKIFRANEDFGGEQNEQTQAGIEIIGYPSIKAEIECILIGIGVLNALEIPNFQIELGHAAIYRRVTNLLNLSETAEIDFRLLIQNKSLTGIKRFVADNPSTLDDFILALPRLFGPATAILKQAKNLTTDKGILTALREMETIVEAVSYTADISVDLGLVQDFHYYTGIIFRGYADLAADNFLSGGRYDHLLEQFTSASSPAVGLALNLDSLTTLQNRAGVIKKQVSTSLLIHYDLDAIQQAEKLMQETPNSELSFFETPTNAISFAKKWHIPAVIHVSRQGIQTIFQREADL</sequence>
<evidence type="ECO:0000250" key="1"/>
<evidence type="ECO:0000305" key="2"/>
<feature type="chain" id="PRO_0000171044" description="ATP phosphoribosyltransferase regulatory subunit">
    <location>
        <begin position="1"/>
        <end position="393"/>
    </location>
</feature>
<organism>
    <name type="scientific">Listeria monocytogenes serovar 1/2a (strain ATCC BAA-679 / EGD-e)</name>
    <dbReference type="NCBI Taxonomy" id="169963"/>
    <lineage>
        <taxon>Bacteria</taxon>
        <taxon>Bacillati</taxon>
        <taxon>Bacillota</taxon>
        <taxon>Bacilli</taxon>
        <taxon>Bacillales</taxon>
        <taxon>Listeriaceae</taxon>
        <taxon>Listeria</taxon>
    </lineage>
</organism>
<accession>Q8Y9F9</accession>
<gene>
    <name type="primary">hisZ</name>
    <name type="ordered locus">lmo0569</name>
</gene>
<protein>
    <recommendedName>
        <fullName>ATP phosphoribosyltransferase regulatory subunit</fullName>
    </recommendedName>
</protein>
<proteinExistence type="inferred from homology"/>
<keyword id="KW-0028">Amino-acid biosynthesis</keyword>
<keyword id="KW-0963">Cytoplasm</keyword>
<keyword id="KW-0368">Histidine biosynthesis</keyword>
<keyword id="KW-1185">Reference proteome</keyword>
<dbReference type="EMBL" id="AL591975">
    <property type="protein sequence ID" value="CAC98648.1"/>
    <property type="molecule type" value="Genomic_DNA"/>
</dbReference>
<dbReference type="PIR" id="AB1146">
    <property type="entry name" value="AB1146"/>
</dbReference>
<dbReference type="RefSeq" id="NP_464097.1">
    <property type="nucleotide sequence ID" value="NC_003210.1"/>
</dbReference>
<dbReference type="RefSeq" id="WP_003721363.1">
    <property type="nucleotide sequence ID" value="NZ_CP149495.1"/>
</dbReference>
<dbReference type="SMR" id="Q8Y9F9"/>
<dbReference type="STRING" id="169963.gene:17593220"/>
<dbReference type="PaxDb" id="169963-lmo0569"/>
<dbReference type="EnsemblBacteria" id="CAC98648">
    <property type="protein sequence ID" value="CAC98648"/>
    <property type="gene ID" value="CAC98648"/>
</dbReference>
<dbReference type="GeneID" id="984506"/>
<dbReference type="KEGG" id="lmo:lmo0569"/>
<dbReference type="PATRIC" id="fig|169963.11.peg.588"/>
<dbReference type="eggNOG" id="COG3705">
    <property type="taxonomic scope" value="Bacteria"/>
</dbReference>
<dbReference type="HOGENOM" id="CLU_025113_0_0_9"/>
<dbReference type="OrthoDB" id="9800814at2"/>
<dbReference type="PhylomeDB" id="Q8Y9F9"/>
<dbReference type="BioCyc" id="LMON169963:LMO0569-MONOMER"/>
<dbReference type="UniPathway" id="UPA00031">
    <property type="reaction ID" value="UER00006"/>
</dbReference>
<dbReference type="Proteomes" id="UP000000817">
    <property type="component" value="Chromosome"/>
</dbReference>
<dbReference type="GO" id="GO:0005737">
    <property type="term" value="C:cytoplasm"/>
    <property type="evidence" value="ECO:0007669"/>
    <property type="project" value="UniProtKB-SubCell"/>
</dbReference>
<dbReference type="GO" id="GO:0140096">
    <property type="term" value="F:catalytic activity, acting on a protein"/>
    <property type="evidence" value="ECO:0007669"/>
    <property type="project" value="UniProtKB-ARBA"/>
</dbReference>
<dbReference type="GO" id="GO:0004821">
    <property type="term" value="F:histidine-tRNA ligase activity"/>
    <property type="evidence" value="ECO:0000318"/>
    <property type="project" value="GO_Central"/>
</dbReference>
<dbReference type="GO" id="GO:0016740">
    <property type="term" value="F:transferase activity"/>
    <property type="evidence" value="ECO:0007669"/>
    <property type="project" value="UniProtKB-ARBA"/>
</dbReference>
<dbReference type="GO" id="GO:0006427">
    <property type="term" value="P:histidyl-tRNA aminoacylation"/>
    <property type="evidence" value="ECO:0000318"/>
    <property type="project" value="GO_Central"/>
</dbReference>
<dbReference type="GO" id="GO:0000105">
    <property type="term" value="P:L-histidine biosynthetic process"/>
    <property type="evidence" value="ECO:0007669"/>
    <property type="project" value="UniProtKB-UniRule"/>
</dbReference>
<dbReference type="CDD" id="cd00773">
    <property type="entry name" value="HisRS-like_core"/>
    <property type="match status" value="1"/>
</dbReference>
<dbReference type="FunFam" id="3.30.930.10:FF:000111">
    <property type="entry name" value="ATP phosphoribosyltransferase regulatory subunit"/>
    <property type="match status" value="1"/>
</dbReference>
<dbReference type="Gene3D" id="3.30.930.10">
    <property type="entry name" value="Bira Bifunctional Protein, Domain 2"/>
    <property type="match status" value="1"/>
</dbReference>
<dbReference type="HAMAP" id="MF_00125">
    <property type="entry name" value="HisZ"/>
    <property type="match status" value="1"/>
</dbReference>
<dbReference type="InterPro" id="IPR045864">
    <property type="entry name" value="aa-tRNA-synth_II/BPL/LPL"/>
</dbReference>
<dbReference type="InterPro" id="IPR041715">
    <property type="entry name" value="HisRS-like_core"/>
</dbReference>
<dbReference type="InterPro" id="IPR004516">
    <property type="entry name" value="HisRS/HisZ"/>
</dbReference>
<dbReference type="InterPro" id="IPR004517">
    <property type="entry name" value="HisZ"/>
</dbReference>
<dbReference type="NCBIfam" id="TIGR00443">
    <property type="entry name" value="hisZ_biosyn_reg"/>
    <property type="match status" value="1"/>
</dbReference>
<dbReference type="NCBIfam" id="NF008936">
    <property type="entry name" value="PRK12292.1-3"/>
    <property type="match status" value="1"/>
</dbReference>
<dbReference type="PANTHER" id="PTHR43707:SF6">
    <property type="entry name" value="ATP PHOSPHORIBOSYLTRANSFERASE REGULATORY SUBUNIT"/>
    <property type="match status" value="1"/>
</dbReference>
<dbReference type="PANTHER" id="PTHR43707">
    <property type="entry name" value="HISTIDYL-TRNA SYNTHETASE"/>
    <property type="match status" value="1"/>
</dbReference>
<dbReference type="Pfam" id="PF13393">
    <property type="entry name" value="tRNA-synt_His"/>
    <property type="match status" value="1"/>
</dbReference>
<dbReference type="PIRSF" id="PIRSF001549">
    <property type="entry name" value="His-tRNA_synth"/>
    <property type="match status" value="1"/>
</dbReference>
<dbReference type="SUPFAM" id="SSF55681">
    <property type="entry name" value="Class II aaRS and biotin synthetases"/>
    <property type="match status" value="1"/>
</dbReference>